<organism>
    <name type="scientific">Mus musculus</name>
    <name type="common">Mouse</name>
    <dbReference type="NCBI Taxonomy" id="10090"/>
    <lineage>
        <taxon>Eukaryota</taxon>
        <taxon>Metazoa</taxon>
        <taxon>Chordata</taxon>
        <taxon>Craniata</taxon>
        <taxon>Vertebrata</taxon>
        <taxon>Euteleostomi</taxon>
        <taxon>Mammalia</taxon>
        <taxon>Eutheria</taxon>
        <taxon>Euarchontoglires</taxon>
        <taxon>Glires</taxon>
        <taxon>Rodentia</taxon>
        <taxon>Myomorpha</taxon>
        <taxon>Muroidea</taxon>
        <taxon>Muridae</taxon>
        <taxon>Murinae</taxon>
        <taxon>Mus</taxon>
        <taxon>Mus</taxon>
    </lineage>
</organism>
<protein>
    <recommendedName>
        <fullName>UPF0711 protein C18orf21 homolog</fullName>
    </recommendedName>
</protein>
<evidence type="ECO:0000250" key="1">
    <source>
        <dbReference type="UniProtKB" id="Q32NC0"/>
    </source>
</evidence>
<evidence type="ECO:0000256" key="2">
    <source>
        <dbReference type="SAM" id="MobiDB-lite"/>
    </source>
</evidence>
<evidence type="ECO:0000305" key="3"/>
<reference key="1">
    <citation type="journal article" date="2005" name="Science">
        <title>The transcriptional landscape of the mammalian genome.</title>
        <authorList>
            <person name="Carninci P."/>
            <person name="Kasukawa T."/>
            <person name="Katayama S."/>
            <person name="Gough J."/>
            <person name="Frith M.C."/>
            <person name="Maeda N."/>
            <person name="Oyama R."/>
            <person name="Ravasi T."/>
            <person name="Lenhard B."/>
            <person name="Wells C."/>
            <person name="Kodzius R."/>
            <person name="Shimokawa K."/>
            <person name="Bajic V.B."/>
            <person name="Brenner S.E."/>
            <person name="Batalov S."/>
            <person name="Forrest A.R."/>
            <person name="Zavolan M."/>
            <person name="Davis M.J."/>
            <person name="Wilming L.G."/>
            <person name="Aidinis V."/>
            <person name="Allen J.E."/>
            <person name="Ambesi-Impiombato A."/>
            <person name="Apweiler R."/>
            <person name="Aturaliya R.N."/>
            <person name="Bailey T.L."/>
            <person name="Bansal M."/>
            <person name="Baxter L."/>
            <person name="Beisel K.W."/>
            <person name="Bersano T."/>
            <person name="Bono H."/>
            <person name="Chalk A.M."/>
            <person name="Chiu K.P."/>
            <person name="Choudhary V."/>
            <person name="Christoffels A."/>
            <person name="Clutterbuck D.R."/>
            <person name="Crowe M.L."/>
            <person name="Dalla E."/>
            <person name="Dalrymple B.P."/>
            <person name="de Bono B."/>
            <person name="Della Gatta G."/>
            <person name="di Bernardo D."/>
            <person name="Down T."/>
            <person name="Engstrom P."/>
            <person name="Fagiolini M."/>
            <person name="Faulkner G."/>
            <person name="Fletcher C.F."/>
            <person name="Fukushima T."/>
            <person name="Furuno M."/>
            <person name="Futaki S."/>
            <person name="Gariboldi M."/>
            <person name="Georgii-Hemming P."/>
            <person name="Gingeras T.R."/>
            <person name="Gojobori T."/>
            <person name="Green R.E."/>
            <person name="Gustincich S."/>
            <person name="Harbers M."/>
            <person name="Hayashi Y."/>
            <person name="Hensch T.K."/>
            <person name="Hirokawa N."/>
            <person name="Hill D."/>
            <person name="Huminiecki L."/>
            <person name="Iacono M."/>
            <person name="Ikeo K."/>
            <person name="Iwama A."/>
            <person name="Ishikawa T."/>
            <person name="Jakt M."/>
            <person name="Kanapin A."/>
            <person name="Katoh M."/>
            <person name="Kawasawa Y."/>
            <person name="Kelso J."/>
            <person name="Kitamura H."/>
            <person name="Kitano H."/>
            <person name="Kollias G."/>
            <person name="Krishnan S.P."/>
            <person name="Kruger A."/>
            <person name="Kummerfeld S.K."/>
            <person name="Kurochkin I.V."/>
            <person name="Lareau L.F."/>
            <person name="Lazarevic D."/>
            <person name="Lipovich L."/>
            <person name="Liu J."/>
            <person name="Liuni S."/>
            <person name="McWilliam S."/>
            <person name="Madan Babu M."/>
            <person name="Madera M."/>
            <person name="Marchionni L."/>
            <person name="Matsuda H."/>
            <person name="Matsuzawa S."/>
            <person name="Miki H."/>
            <person name="Mignone F."/>
            <person name="Miyake S."/>
            <person name="Morris K."/>
            <person name="Mottagui-Tabar S."/>
            <person name="Mulder N."/>
            <person name="Nakano N."/>
            <person name="Nakauchi H."/>
            <person name="Ng P."/>
            <person name="Nilsson R."/>
            <person name="Nishiguchi S."/>
            <person name="Nishikawa S."/>
            <person name="Nori F."/>
            <person name="Ohara O."/>
            <person name="Okazaki Y."/>
            <person name="Orlando V."/>
            <person name="Pang K.C."/>
            <person name="Pavan W.J."/>
            <person name="Pavesi G."/>
            <person name="Pesole G."/>
            <person name="Petrovsky N."/>
            <person name="Piazza S."/>
            <person name="Reed J."/>
            <person name="Reid J.F."/>
            <person name="Ring B.Z."/>
            <person name="Ringwald M."/>
            <person name="Rost B."/>
            <person name="Ruan Y."/>
            <person name="Salzberg S.L."/>
            <person name="Sandelin A."/>
            <person name="Schneider C."/>
            <person name="Schoenbach C."/>
            <person name="Sekiguchi K."/>
            <person name="Semple C.A."/>
            <person name="Seno S."/>
            <person name="Sessa L."/>
            <person name="Sheng Y."/>
            <person name="Shibata Y."/>
            <person name="Shimada H."/>
            <person name="Shimada K."/>
            <person name="Silva D."/>
            <person name="Sinclair B."/>
            <person name="Sperling S."/>
            <person name="Stupka E."/>
            <person name="Sugiura K."/>
            <person name="Sultana R."/>
            <person name="Takenaka Y."/>
            <person name="Taki K."/>
            <person name="Tammoja K."/>
            <person name="Tan S.L."/>
            <person name="Tang S."/>
            <person name="Taylor M.S."/>
            <person name="Tegner J."/>
            <person name="Teichmann S.A."/>
            <person name="Ueda H.R."/>
            <person name="van Nimwegen E."/>
            <person name="Verardo R."/>
            <person name="Wei C.L."/>
            <person name="Yagi K."/>
            <person name="Yamanishi H."/>
            <person name="Zabarovsky E."/>
            <person name="Zhu S."/>
            <person name="Zimmer A."/>
            <person name="Hide W."/>
            <person name="Bult C."/>
            <person name="Grimmond S.M."/>
            <person name="Teasdale R.D."/>
            <person name="Liu E.T."/>
            <person name="Brusic V."/>
            <person name="Quackenbush J."/>
            <person name="Wahlestedt C."/>
            <person name="Mattick J.S."/>
            <person name="Hume D.A."/>
            <person name="Kai C."/>
            <person name="Sasaki D."/>
            <person name="Tomaru Y."/>
            <person name="Fukuda S."/>
            <person name="Kanamori-Katayama M."/>
            <person name="Suzuki M."/>
            <person name="Aoki J."/>
            <person name="Arakawa T."/>
            <person name="Iida J."/>
            <person name="Imamura K."/>
            <person name="Itoh M."/>
            <person name="Kato T."/>
            <person name="Kawaji H."/>
            <person name="Kawagashira N."/>
            <person name="Kawashima T."/>
            <person name="Kojima M."/>
            <person name="Kondo S."/>
            <person name="Konno H."/>
            <person name="Nakano K."/>
            <person name="Ninomiya N."/>
            <person name="Nishio T."/>
            <person name="Okada M."/>
            <person name="Plessy C."/>
            <person name="Shibata K."/>
            <person name="Shiraki T."/>
            <person name="Suzuki S."/>
            <person name="Tagami M."/>
            <person name="Waki K."/>
            <person name="Watahiki A."/>
            <person name="Okamura-Oho Y."/>
            <person name="Suzuki H."/>
            <person name="Kawai J."/>
            <person name="Hayashizaki Y."/>
        </authorList>
    </citation>
    <scope>NUCLEOTIDE SEQUENCE [LARGE SCALE MRNA]</scope>
    <source>
        <strain>C57BL/6J</strain>
        <tissue>Lung</tissue>
    </source>
</reference>
<reference key="2">
    <citation type="journal article" date="2004" name="Genome Res.">
        <title>The status, quality, and expansion of the NIH full-length cDNA project: the Mammalian Gene Collection (MGC).</title>
        <authorList>
            <consortium name="The MGC Project Team"/>
        </authorList>
    </citation>
    <scope>NUCLEOTIDE SEQUENCE [LARGE SCALE MRNA]</scope>
    <source>
        <strain>Czech II</strain>
        <tissue>Jaw</tissue>
        <tissue>Mammary tumor</tissue>
    </source>
</reference>
<accession>Q5XFZ0</accession>
<accession>Q9CXC1</accession>
<accession>Q9CZ41</accession>
<sequence length="217" mass="24123">MRQKYYIEAAARGLVGSCPGQARYLLWAYSSTHEDNSTFQETCPHCFQLLVLDNSRVRLKPKAKLTPKIQKLLNREARNDTLSFKEAKLLRKYKDSTSVLLITCRTCNRTVRHHGKSRSFLWALKSNAATAANKASPKTPKRTAPGSANLGQSTNGSKGKSPSLTIRTPTSGQSTPICSSRNGSKRKKHFSQLKALLSQSASDKNPKLDFRHFLSSL</sequence>
<name>CR021_MOUSE</name>
<feature type="chain" id="PRO_0000279449" description="UPF0711 protein C18orf21 homolog">
    <location>
        <begin position="1"/>
        <end position="217"/>
    </location>
</feature>
<feature type="region of interest" description="Disordered" evidence="2">
    <location>
        <begin position="131"/>
        <end position="190"/>
    </location>
</feature>
<feature type="compositionally biased region" description="Polar residues" evidence="2">
    <location>
        <begin position="149"/>
        <end position="182"/>
    </location>
</feature>
<feature type="modified residue" description="Phosphoserine" evidence="1">
    <location>
        <position position="126"/>
    </location>
</feature>
<feature type="modified residue" description="Phosphothreonine" evidence="1">
    <location>
        <position position="130"/>
    </location>
</feature>
<feature type="modified residue" description="Phosphothreonine" evidence="1">
    <location>
        <position position="139"/>
    </location>
</feature>
<feature type="sequence conflict" description="In Ref. 2; AAH84681." evidence="3" ref="2">
    <original>N</original>
    <variation>Y</variation>
    <location>
        <position position="205"/>
    </location>
</feature>
<comment type="similarity">
    <text evidence="3">Belongs to the UPF0711 family.</text>
</comment>
<comment type="sequence caution" evidence="3">
    <conflict type="frameshift">
        <sequence resource="EMBL-CDS" id="BAB28609"/>
    </conflict>
</comment>
<proteinExistence type="evidence at transcript level"/>
<dbReference type="EMBL" id="AK013030">
    <property type="protein sequence ID" value="BAB28609.1"/>
    <property type="status" value="ALT_FRAME"/>
    <property type="molecule type" value="mRNA"/>
</dbReference>
<dbReference type="EMBL" id="AK018391">
    <property type="protein sequence ID" value="BAB31191.1"/>
    <property type="molecule type" value="mRNA"/>
</dbReference>
<dbReference type="EMBL" id="BC037075">
    <property type="protein sequence ID" value="AAH37075.1"/>
    <property type="molecule type" value="mRNA"/>
</dbReference>
<dbReference type="EMBL" id="BC084681">
    <property type="protein sequence ID" value="AAH84681.1"/>
    <property type="molecule type" value="mRNA"/>
</dbReference>
<dbReference type="CCDS" id="CCDS29101.1"/>
<dbReference type="RefSeq" id="NP_080805.1">
    <property type="nucleotide sequence ID" value="NM_026529.4"/>
</dbReference>
<dbReference type="FunCoup" id="Q5XFZ0">
    <property type="interactions" value="134"/>
</dbReference>
<dbReference type="STRING" id="10090.ENSMUSP00000095251"/>
<dbReference type="GlyGen" id="Q5XFZ0">
    <property type="glycosylation" value="2 sites, 1 N-linked glycan (2 sites)"/>
</dbReference>
<dbReference type="iPTMnet" id="Q5XFZ0"/>
<dbReference type="PhosphoSitePlus" id="Q5XFZ0"/>
<dbReference type="PaxDb" id="10090-ENSMUSP00000095251"/>
<dbReference type="PeptideAtlas" id="Q5XFZ0"/>
<dbReference type="Pumba" id="Q5XFZ0"/>
<dbReference type="Antibodypedia" id="54637">
    <property type="antibodies" value="24 antibodies from 10 providers"/>
</dbReference>
<dbReference type="DNASU" id="68046"/>
<dbReference type="Ensembl" id="ENSMUST00000097646.5">
    <property type="protein sequence ID" value="ENSMUSP00000095251.4"/>
    <property type="gene ID" value="ENSMUSG00000024273.9"/>
</dbReference>
<dbReference type="GeneID" id="68046"/>
<dbReference type="KEGG" id="mmu:68046"/>
<dbReference type="UCSC" id="uc008egt.1">
    <property type="organism name" value="mouse"/>
</dbReference>
<dbReference type="AGR" id="MGI:1915296"/>
<dbReference type="MGI" id="MGI:1915296">
    <property type="gene designation" value="2700062C07Rik"/>
</dbReference>
<dbReference type="VEuPathDB" id="HostDB:ENSMUSG00000024273"/>
<dbReference type="eggNOG" id="ENOG502S2A1">
    <property type="taxonomic scope" value="Eukaryota"/>
</dbReference>
<dbReference type="GeneTree" id="ENSGT00390000013383"/>
<dbReference type="HOGENOM" id="CLU_110760_0_0_1"/>
<dbReference type="InParanoid" id="Q5XFZ0"/>
<dbReference type="OMA" id="HKGVNRD"/>
<dbReference type="OrthoDB" id="10049098at2759"/>
<dbReference type="PhylomeDB" id="Q5XFZ0"/>
<dbReference type="TreeFam" id="TF330815"/>
<dbReference type="BioGRID-ORCS" id="68046">
    <property type="hits" value="11 hits in 78 CRISPR screens"/>
</dbReference>
<dbReference type="PRO" id="PR:Q5XFZ0"/>
<dbReference type="Proteomes" id="UP000000589">
    <property type="component" value="Chromosome 18"/>
</dbReference>
<dbReference type="RNAct" id="Q5XFZ0">
    <property type="molecule type" value="protein"/>
</dbReference>
<dbReference type="Bgee" id="ENSMUSG00000024273">
    <property type="expression patterns" value="Expressed in secondary oocyte and 66 other cell types or tissues"/>
</dbReference>
<dbReference type="ExpressionAtlas" id="Q5XFZ0">
    <property type="expression patterns" value="baseline and differential"/>
</dbReference>
<dbReference type="InterPro" id="IPR029779">
    <property type="entry name" value="DUF4674"/>
</dbReference>
<dbReference type="PANTHER" id="PTHR31402">
    <property type="entry name" value="UPF0711 PROTEIN C18ORF21"/>
    <property type="match status" value="1"/>
</dbReference>
<dbReference type="PANTHER" id="PTHR31402:SF2">
    <property type="entry name" value="UPF0711 PROTEIN C18ORF21"/>
    <property type="match status" value="1"/>
</dbReference>
<dbReference type="Pfam" id="PF15719">
    <property type="entry name" value="DUF4674"/>
    <property type="match status" value="1"/>
</dbReference>
<keyword id="KW-0597">Phosphoprotein</keyword>
<keyword id="KW-1185">Reference proteome</keyword>